<proteinExistence type="evidence at protein level"/>
<organism>
    <name type="scientific">Rattus norvegicus</name>
    <name type="common">Rat</name>
    <dbReference type="NCBI Taxonomy" id="10116"/>
    <lineage>
        <taxon>Eukaryota</taxon>
        <taxon>Metazoa</taxon>
        <taxon>Chordata</taxon>
        <taxon>Craniata</taxon>
        <taxon>Vertebrata</taxon>
        <taxon>Euteleostomi</taxon>
        <taxon>Mammalia</taxon>
        <taxon>Eutheria</taxon>
        <taxon>Euarchontoglires</taxon>
        <taxon>Glires</taxon>
        <taxon>Rodentia</taxon>
        <taxon>Myomorpha</taxon>
        <taxon>Muroidea</taxon>
        <taxon>Muridae</taxon>
        <taxon>Murinae</taxon>
        <taxon>Rattus</taxon>
    </lineage>
</organism>
<dbReference type="EMBL" id="X16417">
    <property type="protein sequence ID" value="CAA34439.1"/>
    <property type="molecule type" value="mRNA"/>
</dbReference>
<dbReference type="EMBL" id="X15009">
    <property type="protein sequence ID" value="CAA33114.1"/>
    <property type="molecule type" value="Genomic_DNA"/>
</dbReference>
<dbReference type="EMBL" id="M17084">
    <property type="protein sequence ID" value="AAA41309.1"/>
    <property type="molecule type" value="mRNA"/>
</dbReference>
<dbReference type="EMBL" id="X67613">
    <property type="protein sequence ID" value="CAA47873.1"/>
    <property type="molecule type" value="Genomic_DNA"/>
</dbReference>
<dbReference type="EMBL" id="BC058448">
    <property type="protein sequence ID" value="AAH58448.1"/>
    <property type="molecule type" value="mRNA"/>
</dbReference>
<dbReference type="PIR" id="S04588">
    <property type="entry name" value="S04588"/>
</dbReference>
<dbReference type="PIR" id="S06748">
    <property type="entry name" value="HBRT"/>
</dbReference>
<dbReference type="RefSeq" id="NP_150237.1">
    <property type="nucleotide sequence ID" value="NM_033234.1"/>
</dbReference>
<dbReference type="PDB" id="3DHT">
    <property type="method" value="X-ray"/>
    <property type="resolution" value="2.98 A"/>
    <property type="chains" value="B=2-147"/>
</dbReference>
<dbReference type="PDB" id="3HF4">
    <property type="method" value="X-ray"/>
    <property type="resolution" value="2.70 A"/>
    <property type="chains" value="B/F=2-147"/>
</dbReference>
<dbReference type="PDBsum" id="3DHT"/>
<dbReference type="PDBsum" id="3HF4"/>
<dbReference type="SMR" id="P02091"/>
<dbReference type="BioGRID" id="246605">
    <property type="interactions" value="5"/>
</dbReference>
<dbReference type="ComplexPortal" id="CPX-2925">
    <property type="entry name" value="Hemoglobin HbA complex, variant HBB1"/>
</dbReference>
<dbReference type="FunCoup" id="P02091">
    <property type="interactions" value="40"/>
</dbReference>
<dbReference type="IntAct" id="P02091">
    <property type="interactions" value="2"/>
</dbReference>
<dbReference type="STRING" id="10116.ENSRNOP00000070324"/>
<dbReference type="CarbonylDB" id="P02091"/>
<dbReference type="GlyGen" id="P02091">
    <property type="glycosylation" value="1 site, 1 O-linked glycan (1 site)"/>
</dbReference>
<dbReference type="iPTMnet" id="P02091"/>
<dbReference type="PhosphoSitePlus" id="P02091"/>
<dbReference type="jPOST" id="P02091"/>
<dbReference type="PaxDb" id="10116-ENSRNOP00000048250"/>
<dbReference type="Ensembl" id="ENSRNOT00000114441.1">
    <property type="protein sequence ID" value="ENSRNOP00000085307.1"/>
    <property type="gene ID" value="ENSRNOG00000047098.3"/>
</dbReference>
<dbReference type="GeneID" id="24440"/>
<dbReference type="KEGG" id="rno:24440"/>
<dbReference type="UCSC" id="RGD:2783">
    <property type="organism name" value="rat"/>
</dbReference>
<dbReference type="AGR" id="RGD:2783"/>
<dbReference type="CTD" id="3043"/>
<dbReference type="RGD" id="2783">
    <property type="gene designation" value="Hbb"/>
</dbReference>
<dbReference type="eggNOG" id="KOG3378">
    <property type="taxonomic scope" value="Eukaryota"/>
</dbReference>
<dbReference type="GeneTree" id="ENSGT00940000156216"/>
<dbReference type="InParanoid" id="P02091"/>
<dbReference type="OrthoDB" id="47196at9989"/>
<dbReference type="PhylomeDB" id="P02091"/>
<dbReference type="TreeFam" id="TF333268"/>
<dbReference type="Reactome" id="R-RNO-1237044">
    <property type="pathway name" value="Erythrocytes take up carbon dioxide and release oxygen"/>
</dbReference>
<dbReference type="Reactome" id="R-RNO-1247673">
    <property type="pathway name" value="Erythrocytes take up oxygen and release carbon dioxide"/>
</dbReference>
<dbReference type="Reactome" id="R-RNO-2168880">
    <property type="pathway name" value="Scavenging of heme from plasma"/>
</dbReference>
<dbReference type="Reactome" id="R-RNO-6798695">
    <property type="pathway name" value="Neutrophil degranulation"/>
</dbReference>
<dbReference type="Reactome" id="R-RNO-9707564">
    <property type="pathway name" value="Cytoprotection by HMOX1"/>
</dbReference>
<dbReference type="Reactome" id="R-RNO-9707616">
    <property type="pathway name" value="Heme signaling"/>
</dbReference>
<dbReference type="EvolutionaryTrace" id="P02091"/>
<dbReference type="PRO" id="PR:P02091"/>
<dbReference type="Proteomes" id="UP000002494">
    <property type="component" value="Chromosome 1"/>
</dbReference>
<dbReference type="GO" id="GO:0005615">
    <property type="term" value="C:extracellular space"/>
    <property type="evidence" value="ECO:0000266"/>
    <property type="project" value="RGD"/>
</dbReference>
<dbReference type="GO" id="GO:0031838">
    <property type="term" value="C:haptoglobin-hemoglobin complex"/>
    <property type="evidence" value="ECO:0000266"/>
    <property type="project" value="RGD"/>
</dbReference>
<dbReference type="GO" id="GO:0005833">
    <property type="term" value="C:hemoglobin complex"/>
    <property type="evidence" value="ECO:0000314"/>
    <property type="project" value="RGD"/>
</dbReference>
<dbReference type="GO" id="GO:0020037">
    <property type="term" value="F:heme binding"/>
    <property type="evidence" value="ECO:0000318"/>
    <property type="project" value="GO_Central"/>
</dbReference>
<dbReference type="GO" id="GO:0031721">
    <property type="term" value="F:hemoglobin alpha binding"/>
    <property type="evidence" value="ECO:0000314"/>
    <property type="project" value="RGD"/>
</dbReference>
<dbReference type="GO" id="GO:0031722">
    <property type="term" value="F:hemoglobin beta binding"/>
    <property type="evidence" value="ECO:0000314"/>
    <property type="project" value="RGD"/>
</dbReference>
<dbReference type="GO" id="GO:0030492">
    <property type="term" value="F:hemoglobin binding"/>
    <property type="evidence" value="ECO:0000266"/>
    <property type="project" value="RGD"/>
</dbReference>
<dbReference type="GO" id="GO:0046872">
    <property type="term" value="F:metal ion binding"/>
    <property type="evidence" value="ECO:0007669"/>
    <property type="project" value="UniProtKB-KW"/>
</dbReference>
<dbReference type="GO" id="GO:0019825">
    <property type="term" value="F:oxygen binding"/>
    <property type="evidence" value="ECO:0000266"/>
    <property type="project" value="RGD"/>
</dbReference>
<dbReference type="GO" id="GO:0005344">
    <property type="term" value="F:oxygen carrier activity"/>
    <property type="evidence" value="ECO:0000266"/>
    <property type="project" value="RGD"/>
</dbReference>
<dbReference type="GO" id="GO:0044877">
    <property type="term" value="F:protein-containing complex binding"/>
    <property type="evidence" value="ECO:0000314"/>
    <property type="project" value="RGD"/>
</dbReference>
<dbReference type="GO" id="GO:0015670">
    <property type="term" value="P:carbon dioxide transport"/>
    <property type="evidence" value="ECO:0000303"/>
    <property type="project" value="ComplexPortal"/>
</dbReference>
<dbReference type="GO" id="GO:0098869">
    <property type="term" value="P:cellular oxidant detoxification"/>
    <property type="evidence" value="ECO:0007669"/>
    <property type="project" value="GOC"/>
</dbReference>
<dbReference type="GO" id="GO:0048821">
    <property type="term" value="P:erythrocyte development"/>
    <property type="evidence" value="ECO:0000266"/>
    <property type="project" value="RGD"/>
</dbReference>
<dbReference type="GO" id="GO:0006749">
    <property type="term" value="P:glutathione metabolic process"/>
    <property type="evidence" value="ECO:0000314"/>
    <property type="project" value="RGD"/>
</dbReference>
<dbReference type="GO" id="GO:0030097">
    <property type="term" value="P:hemopoiesis"/>
    <property type="evidence" value="ECO:0000266"/>
    <property type="project" value="RGD"/>
</dbReference>
<dbReference type="GO" id="GO:0042744">
    <property type="term" value="P:hydrogen peroxide catabolic process"/>
    <property type="evidence" value="ECO:0000266"/>
    <property type="project" value="RGD"/>
</dbReference>
<dbReference type="GO" id="GO:0030185">
    <property type="term" value="P:nitric oxide transport"/>
    <property type="evidence" value="ECO:0000266"/>
    <property type="project" value="RGD"/>
</dbReference>
<dbReference type="GO" id="GO:0015671">
    <property type="term" value="P:oxygen transport"/>
    <property type="evidence" value="ECO:0000314"/>
    <property type="project" value="RGD"/>
</dbReference>
<dbReference type="GO" id="GO:0070293">
    <property type="term" value="P:renal absorption"/>
    <property type="evidence" value="ECO:0000266"/>
    <property type="project" value="RGD"/>
</dbReference>
<dbReference type="GO" id="GO:0042542">
    <property type="term" value="P:response to hydrogen peroxide"/>
    <property type="evidence" value="ECO:0000266"/>
    <property type="project" value="RGD"/>
</dbReference>
<dbReference type="CDD" id="cd08925">
    <property type="entry name" value="Hb-beta-like"/>
    <property type="match status" value="1"/>
</dbReference>
<dbReference type="FunFam" id="1.10.490.10:FF:000001">
    <property type="entry name" value="Hemoglobin subunit beta"/>
    <property type="match status" value="1"/>
</dbReference>
<dbReference type="Gene3D" id="1.10.490.10">
    <property type="entry name" value="Globins"/>
    <property type="match status" value="1"/>
</dbReference>
<dbReference type="InterPro" id="IPR000971">
    <property type="entry name" value="Globin"/>
</dbReference>
<dbReference type="InterPro" id="IPR009050">
    <property type="entry name" value="Globin-like_sf"/>
</dbReference>
<dbReference type="InterPro" id="IPR012292">
    <property type="entry name" value="Globin/Proto"/>
</dbReference>
<dbReference type="InterPro" id="IPR002337">
    <property type="entry name" value="Hemoglobin_b"/>
</dbReference>
<dbReference type="InterPro" id="IPR050056">
    <property type="entry name" value="Hemoglobin_oxygen_transport"/>
</dbReference>
<dbReference type="PANTHER" id="PTHR11442">
    <property type="entry name" value="HEMOGLOBIN FAMILY MEMBER"/>
    <property type="match status" value="1"/>
</dbReference>
<dbReference type="PANTHER" id="PTHR11442:SF42">
    <property type="entry name" value="HEMOGLOBIN SUBUNIT BETA"/>
    <property type="match status" value="1"/>
</dbReference>
<dbReference type="Pfam" id="PF00042">
    <property type="entry name" value="Globin"/>
    <property type="match status" value="1"/>
</dbReference>
<dbReference type="PRINTS" id="PR00814">
    <property type="entry name" value="BETAHAEM"/>
</dbReference>
<dbReference type="SUPFAM" id="SSF46458">
    <property type="entry name" value="Globin-like"/>
    <property type="match status" value="1"/>
</dbReference>
<dbReference type="PROSITE" id="PS01033">
    <property type="entry name" value="GLOBIN"/>
    <property type="match status" value="1"/>
</dbReference>
<evidence type="ECO:0000250" key="1">
    <source>
        <dbReference type="UniProtKB" id="P02086"/>
    </source>
</evidence>
<evidence type="ECO:0000250" key="2">
    <source>
        <dbReference type="UniProtKB" id="P02088"/>
    </source>
</evidence>
<evidence type="ECO:0000250" key="3">
    <source>
        <dbReference type="UniProtKB" id="P02089"/>
    </source>
</evidence>
<evidence type="ECO:0000250" key="4">
    <source>
        <dbReference type="UniProtKB" id="P11517"/>
    </source>
</evidence>
<evidence type="ECO:0000255" key="5">
    <source>
        <dbReference type="PROSITE-ProRule" id="PRU00238"/>
    </source>
</evidence>
<evidence type="ECO:0000269" key="6">
    <source>
    </source>
</evidence>
<evidence type="ECO:0000269" key="7">
    <source ref="6"/>
</evidence>
<evidence type="ECO:0000269" key="8">
    <source ref="8"/>
</evidence>
<evidence type="ECO:0000305" key="9"/>
<evidence type="ECO:0007744" key="10">
    <source>
    </source>
</evidence>
<evidence type="ECO:0007829" key="11">
    <source>
        <dbReference type="PDB" id="3HF4"/>
    </source>
</evidence>
<sequence length="147" mass="15979">MVHLTDAEKAAVNGLWGKVNPDDVGGEALGRLLVVYPWTQRYFDSFGDLSSASAIMGNPKVKAHGKKVINAFNDGLKHLDNLKGTFAHLSELHCDKLHVDPENFRLLGNMIVIVLGHHLGKEFTPCAQAAFQKVVAGVASALAHKYH</sequence>
<comment type="function">
    <text>Involved in oxygen transport from the lung to the various peripheral tissues.</text>
</comment>
<comment type="subunit">
    <text>Heterotetramer of two alpha chains and two beta chains.</text>
</comment>
<comment type="tissue specificity">
    <text>Red blood cells.</text>
</comment>
<comment type="polymorphism">
    <text evidence="9">In rats there are two non-allelic alpha chains and two non-allelic beta chains.</text>
</comment>
<comment type="similarity">
    <text evidence="5">Belongs to the globin family.</text>
</comment>
<comment type="caution">
    <text evidence="9">PubMed:8334153 incorrectly assigned their sequence fragment as a fatty acid-binding protein.</text>
</comment>
<protein>
    <recommendedName>
        <fullName>Hemoglobin subunit beta-1</fullName>
    </recommendedName>
    <alternativeName>
        <fullName>Beta-1-globin</fullName>
    </alternativeName>
    <alternativeName>
        <fullName>Hemoglobin beta chain, major-form</fullName>
    </alternativeName>
    <alternativeName>
        <fullName>Hemoglobin beta-1 chain</fullName>
    </alternativeName>
</protein>
<feature type="initiator methionine" description="Removed" evidence="1 6 7 8">
    <location>
        <position position="1"/>
    </location>
</feature>
<feature type="chain" id="PRO_0000053090" description="Hemoglobin subunit beta-1">
    <location>
        <begin position="2"/>
        <end position="147"/>
    </location>
</feature>
<feature type="domain" description="Globin" evidence="5">
    <location>
        <begin position="3"/>
        <end position="147"/>
    </location>
</feature>
<feature type="binding site" description="distal binding residue">
    <location>
        <position position="64"/>
    </location>
    <ligand>
        <name>heme b</name>
        <dbReference type="ChEBI" id="CHEBI:60344"/>
    </ligand>
    <ligandPart>
        <name>Fe</name>
        <dbReference type="ChEBI" id="CHEBI:18248"/>
    </ligandPart>
</feature>
<feature type="binding site" description="proximal binding residue">
    <location>
        <position position="93"/>
    </location>
    <ligand>
        <name>heme b</name>
        <dbReference type="ChEBI" id="CHEBI:60344"/>
    </ligand>
    <ligandPart>
        <name>Fe</name>
        <dbReference type="ChEBI" id="CHEBI:18248"/>
    </ligandPart>
</feature>
<feature type="modified residue" description="N-acetylvaline" evidence="1">
    <location>
        <position position="2"/>
    </location>
</feature>
<feature type="modified residue" description="N6-succinyllysine" evidence="2">
    <location>
        <position position="18"/>
    </location>
</feature>
<feature type="modified residue" description="Phosphoserine" evidence="10">
    <location>
        <position position="45"/>
    </location>
</feature>
<feature type="modified residue" description="Phosphoserine" evidence="10">
    <location>
        <position position="51"/>
    </location>
</feature>
<feature type="modified residue" description="Phosphoserine" evidence="10">
    <location>
        <position position="53"/>
    </location>
</feature>
<feature type="modified residue" description="N6-succinyllysine" evidence="3">
    <location>
        <position position="60"/>
    </location>
</feature>
<feature type="modified residue" description="Asymmetric dimethylarginine" evidence="3">
    <location>
        <position position="105"/>
    </location>
</feature>
<feature type="modified residue" description="Phosphothreonine" evidence="4">
    <location>
        <position position="124"/>
    </location>
</feature>
<feature type="sequence variant">
    <original>P</original>
    <variation>A</variation>
    <location>
        <position position="59"/>
    </location>
</feature>
<feature type="sequence variant">
    <original>H</original>
    <variation>N</variation>
    <location>
        <position position="88"/>
    </location>
</feature>
<feature type="sequence variant">
    <original>S</original>
    <variation>T</variation>
    <location>
        <position position="90"/>
    </location>
</feature>
<feature type="sequence variant">
    <original>T</original>
    <variation>S</variation>
    <location>
        <position position="124"/>
    </location>
</feature>
<feature type="sequence conflict" description="In Ref. 3; AAA41309." evidence="9" ref="3">
    <original>G</original>
    <variation>A</variation>
    <location>
        <position position="14"/>
    </location>
</feature>
<feature type="helix" evidence="11">
    <location>
        <begin position="6"/>
        <end position="16"/>
    </location>
</feature>
<feature type="helix" evidence="11">
    <location>
        <begin position="21"/>
        <end position="35"/>
    </location>
</feature>
<feature type="helix" evidence="11">
    <location>
        <begin position="37"/>
        <end position="42"/>
    </location>
</feature>
<feature type="helix" evidence="11">
    <location>
        <begin position="44"/>
        <end position="46"/>
    </location>
</feature>
<feature type="helix" evidence="11">
    <location>
        <begin position="52"/>
        <end position="57"/>
    </location>
</feature>
<feature type="helix" evidence="11">
    <location>
        <begin position="59"/>
        <end position="77"/>
    </location>
</feature>
<feature type="helix" evidence="11">
    <location>
        <begin position="79"/>
        <end position="81"/>
    </location>
</feature>
<feature type="helix" evidence="11">
    <location>
        <begin position="82"/>
        <end position="85"/>
    </location>
</feature>
<feature type="helix" evidence="11">
    <location>
        <begin position="87"/>
        <end position="95"/>
    </location>
</feature>
<feature type="helix" evidence="11">
    <location>
        <begin position="102"/>
        <end position="119"/>
    </location>
</feature>
<feature type="helix" evidence="11">
    <location>
        <begin position="120"/>
        <end position="122"/>
    </location>
</feature>
<feature type="helix" evidence="11">
    <location>
        <begin position="125"/>
        <end position="142"/>
    </location>
</feature>
<accession>P02091</accession>
<accession>P33584</accession>
<name>HBB1_RAT</name>
<keyword id="KW-0002">3D-structure</keyword>
<keyword id="KW-0007">Acetylation</keyword>
<keyword id="KW-0903">Direct protein sequencing</keyword>
<keyword id="KW-0349">Heme</keyword>
<keyword id="KW-0408">Iron</keyword>
<keyword id="KW-0479">Metal-binding</keyword>
<keyword id="KW-0488">Methylation</keyword>
<keyword id="KW-0561">Oxygen transport</keyword>
<keyword id="KW-0597">Phosphoprotein</keyword>
<keyword id="KW-1185">Reference proteome</keyword>
<keyword id="KW-0813">Transport</keyword>
<reference key="1">
    <citation type="journal article" date="1989" name="Nucleic Acids Res.">
        <title>cDNA sequences of two beta-globin genes in a Sprague-Dawley rat.</title>
        <authorList>
            <person name="Woo C."/>
            <person name="Lam V.M.S."/>
            <person name="Tam J.W.O."/>
        </authorList>
    </citation>
    <scope>NUCLEOTIDE SEQUENCE [MRNA]</scope>
    <source>
        <strain>Sprague-Dawley</strain>
    </source>
</reference>
<reference key="2">
    <citation type="journal article" date="1989" name="Nucleic Acids Res.">
        <title>Genomic sequence of rat beta-globin major gene.</title>
        <authorList>
            <person name="Radosavlevic D."/>
            <person name="Crkvenjakov R."/>
        </authorList>
    </citation>
    <scope>NUCLEOTIDE SEQUENCE [GENOMIC DNA]</scope>
    <source>
        <strain>Wistar</strain>
    </source>
</reference>
<reference key="3">
    <citation type="journal article" date="1987" name="Biochem. Biophys. Res. Commun.">
        <title>Molecular cloning and sequence analysis of two rat major globin cDNAs.</title>
        <authorList>
            <person name="Satoh H."/>
            <person name="Fujii H."/>
            <person name="Okazaki T."/>
        </authorList>
    </citation>
    <scope>NUCLEOTIDE SEQUENCE [MRNA]</scope>
</reference>
<reference key="4">
    <citation type="submission" date="1992-07" db="EMBL/GenBank/DDBJ databases">
        <authorList>
            <person name="Inokuchi N."/>
            <person name="Iwahara S."/>
            <person name="Satoh H."/>
            <person name="Nagoe Y."/>
            <person name="Okazaki T."/>
        </authorList>
    </citation>
    <scope>NUCLEOTIDE SEQUENCE</scope>
    <source>
        <strain>Wistar</strain>
        <tissue>Liver</tissue>
    </source>
</reference>
<reference key="5">
    <citation type="journal article" date="2004" name="Genome Res.">
        <title>The status, quality, and expansion of the NIH full-length cDNA project: the Mammalian Gene Collection (MGC).</title>
        <authorList>
            <consortium name="The MGC Project Team"/>
        </authorList>
    </citation>
    <scope>NUCLEOTIDE SEQUENCE [LARGE SCALE MRNA]</scope>
    <source>
        <tissue>Pituitary</tissue>
    </source>
</reference>
<reference key="6">
    <citation type="journal article" date="1977" name="Fed. Proc.">
        <title>Primary structure of the major beta chain of rat hemoglobin.</title>
        <authorList>
            <person name="Garrick L.M."/>
            <person name="Klonowski T.J."/>
            <person name="Sloan R.L."/>
            <person name="Ryan T.W."/>
            <person name="Garrick M.D."/>
        </authorList>
    </citation>
    <scope>PROTEIN SEQUENCE OF 2-147</scope>
</reference>
<reference key="7">
    <citation type="journal article" date="1993" name="Biochim. Biophys. Acta">
        <title>Purification and characterization of fatty acid-binding proteins from brown adipose tissue of the rat.</title>
        <authorList>
            <person name="Dutta-Roy A.K."/>
            <person name="Huang Y."/>
            <person name="Dunbar B."/>
            <person name="Trayhurn P."/>
        </authorList>
    </citation>
    <scope>PROTEIN SEQUENCE OF 2-36</scope>
    <source>
        <tissue>Brown adipose tissue</tissue>
    </source>
</reference>
<reference key="8">
    <citation type="submission" date="2007-09" db="UniProtKB">
        <authorList>
            <person name="Lubec G."/>
            <person name="Afjehi-Sadat L."/>
            <person name="Kang S.U."/>
            <person name="Lubec S."/>
        </authorList>
    </citation>
    <scope>PROTEIN SEQUENCE OF 2-60; 67-145; 84-104 AND 106-145</scope>
    <scope>IDENTIFICATION BY MASS SPECTROMETRY</scope>
    <source>
        <strain>Sprague-Dawley</strain>
        <tissue>Brain</tissue>
        <tissue>Spinal cord</tissue>
    </source>
</reference>
<reference key="9">
    <citation type="journal article" date="2012" name="Nat. Commun.">
        <title>Quantitative maps of protein phosphorylation sites across 14 different rat organs and tissues.</title>
        <authorList>
            <person name="Lundby A."/>
            <person name="Secher A."/>
            <person name="Lage K."/>
            <person name="Nordsborg N.B."/>
            <person name="Dmytriyev A."/>
            <person name="Lundby C."/>
            <person name="Olsen J.V."/>
        </authorList>
    </citation>
    <scope>PHOSPHORYLATION [LARGE SCALE ANALYSIS] AT SER-45; SER-51 AND SER-53</scope>
    <scope>IDENTIFICATION BY MASS SPECTROMETRY [LARGE SCALE ANALYSIS]</scope>
</reference>
<gene>
    <name type="primary">Hbb</name>
</gene>